<comment type="function">
    <text evidence="1">Essential for recycling GMP and indirectly, cGMP.</text>
</comment>
<comment type="catalytic activity">
    <reaction evidence="1">
        <text>GMP + ATP = GDP + ADP</text>
        <dbReference type="Rhea" id="RHEA:20780"/>
        <dbReference type="ChEBI" id="CHEBI:30616"/>
        <dbReference type="ChEBI" id="CHEBI:58115"/>
        <dbReference type="ChEBI" id="CHEBI:58189"/>
        <dbReference type="ChEBI" id="CHEBI:456216"/>
        <dbReference type="EC" id="2.7.4.8"/>
    </reaction>
</comment>
<comment type="subcellular location">
    <subcellularLocation>
        <location evidence="1">Cytoplasm</location>
    </subcellularLocation>
</comment>
<comment type="similarity">
    <text evidence="1">Belongs to the guanylate kinase family.</text>
</comment>
<reference key="1">
    <citation type="journal article" date="2006" name="J. Bacteriol.">
        <title>Complete genome sequence of the dehalorespiring bacterium Desulfitobacterium hafniense Y51 and comparison with Dehalococcoides ethenogenes 195.</title>
        <authorList>
            <person name="Nonaka H."/>
            <person name="Keresztes G."/>
            <person name="Shinoda Y."/>
            <person name="Ikenaga Y."/>
            <person name="Abe M."/>
            <person name="Naito K."/>
            <person name="Inatomi K."/>
            <person name="Furukawa K."/>
            <person name="Inui M."/>
            <person name="Yukawa H."/>
        </authorList>
    </citation>
    <scope>NUCLEOTIDE SEQUENCE [LARGE SCALE GENOMIC DNA]</scope>
    <source>
        <strain>Y51</strain>
    </source>
</reference>
<gene>
    <name evidence="1" type="primary">gmk</name>
    <name type="ordered locus">DSY2729</name>
</gene>
<keyword id="KW-0067">ATP-binding</keyword>
<keyword id="KW-0963">Cytoplasm</keyword>
<keyword id="KW-0418">Kinase</keyword>
<keyword id="KW-0547">Nucleotide-binding</keyword>
<keyword id="KW-1185">Reference proteome</keyword>
<keyword id="KW-0808">Transferase</keyword>
<protein>
    <recommendedName>
        <fullName evidence="1">Guanylate kinase</fullName>
        <ecNumber evidence="1">2.7.4.8</ecNumber>
    </recommendedName>
    <alternativeName>
        <fullName evidence="1">GMP kinase</fullName>
    </alternativeName>
</protein>
<name>KGUA_DESHY</name>
<dbReference type="EC" id="2.7.4.8" evidence="1"/>
<dbReference type="EMBL" id="AP008230">
    <property type="protein sequence ID" value="BAE84518.1"/>
    <property type="molecule type" value="Genomic_DNA"/>
</dbReference>
<dbReference type="RefSeq" id="WP_011460557.1">
    <property type="nucleotide sequence ID" value="NC_007907.1"/>
</dbReference>
<dbReference type="SMR" id="Q24TX4"/>
<dbReference type="STRING" id="138119.DSY2729"/>
<dbReference type="KEGG" id="dsy:DSY2729"/>
<dbReference type="eggNOG" id="COG0194">
    <property type="taxonomic scope" value="Bacteria"/>
</dbReference>
<dbReference type="HOGENOM" id="CLU_001715_1_2_9"/>
<dbReference type="Proteomes" id="UP000001946">
    <property type="component" value="Chromosome"/>
</dbReference>
<dbReference type="GO" id="GO:0005829">
    <property type="term" value="C:cytosol"/>
    <property type="evidence" value="ECO:0007669"/>
    <property type="project" value="TreeGrafter"/>
</dbReference>
<dbReference type="GO" id="GO:0005524">
    <property type="term" value="F:ATP binding"/>
    <property type="evidence" value="ECO:0007669"/>
    <property type="project" value="UniProtKB-UniRule"/>
</dbReference>
<dbReference type="GO" id="GO:0004385">
    <property type="term" value="F:guanylate kinase activity"/>
    <property type="evidence" value="ECO:0007669"/>
    <property type="project" value="UniProtKB-UniRule"/>
</dbReference>
<dbReference type="CDD" id="cd00071">
    <property type="entry name" value="GMPK"/>
    <property type="match status" value="1"/>
</dbReference>
<dbReference type="FunFam" id="3.40.50.300:FF:000855">
    <property type="entry name" value="Guanylate kinase"/>
    <property type="match status" value="1"/>
</dbReference>
<dbReference type="FunFam" id="3.30.63.10:FF:000002">
    <property type="entry name" value="Guanylate kinase 1"/>
    <property type="match status" value="1"/>
</dbReference>
<dbReference type="Gene3D" id="3.30.63.10">
    <property type="entry name" value="Guanylate Kinase phosphate binding domain"/>
    <property type="match status" value="1"/>
</dbReference>
<dbReference type="Gene3D" id="3.40.50.300">
    <property type="entry name" value="P-loop containing nucleotide triphosphate hydrolases"/>
    <property type="match status" value="1"/>
</dbReference>
<dbReference type="HAMAP" id="MF_00328">
    <property type="entry name" value="Guanylate_kinase"/>
    <property type="match status" value="1"/>
</dbReference>
<dbReference type="InterPro" id="IPR008145">
    <property type="entry name" value="GK/Ca_channel_bsu"/>
</dbReference>
<dbReference type="InterPro" id="IPR008144">
    <property type="entry name" value="Guanylate_kin-like_dom"/>
</dbReference>
<dbReference type="InterPro" id="IPR017665">
    <property type="entry name" value="Guanylate_kinase"/>
</dbReference>
<dbReference type="InterPro" id="IPR020590">
    <property type="entry name" value="Guanylate_kinase_CS"/>
</dbReference>
<dbReference type="InterPro" id="IPR027417">
    <property type="entry name" value="P-loop_NTPase"/>
</dbReference>
<dbReference type="NCBIfam" id="TIGR03263">
    <property type="entry name" value="guanyl_kin"/>
    <property type="match status" value="1"/>
</dbReference>
<dbReference type="PANTHER" id="PTHR23117:SF13">
    <property type="entry name" value="GUANYLATE KINASE"/>
    <property type="match status" value="1"/>
</dbReference>
<dbReference type="PANTHER" id="PTHR23117">
    <property type="entry name" value="GUANYLATE KINASE-RELATED"/>
    <property type="match status" value="1"/>
</dbReference>
<dbReference type="Pfam" id="PF00625">
    <property type="entry name" value="Guanylate_kin"/>
    <property type="match status" value="1"/>
</dbReference>
<dbReference type="SMART" id="SM00072">
    <property type="entry name" value="GuKc"/>
    <property type="match status" value="1"/>
</dbReference>
<dbReference type="SUPFAM" id="SSF52540">
    <property type="entry name" value="P-loop containing nucleoside triphosphate hydrolases"/>
    <property type="match status" value="1"/>
</dbReference>
<dbReference type="PROSITE" id="PS00856">
    <property type="entry name" value="GUANYLATE_KINASE_1"/>
    <property type="match status" value="1"/>
</dbReference>
<dbReference type="PROSITE" id="PS50052">
    <property type="entry name" value="GUANYLATE_KINASE_2"/>
    <property type="match status" value="1"/>
</dbReference>
<evidence type="ECO:0000255" key="1">
    <source>
        <dbReference type="HAMAP-Rule" id="MF_00328"/>
    </source>
</evidence>
<sequence>MEQNHGLLIVLSGPSGAGKGTLCQELLRQLPQVKYSVSATTRQPRPGEMDGLHYYFRSREEFQTMIEQDQLLEWAEFCGNYYGTPQFAVEQAIQAGNDVILEIEIQGALQVKQRFPQGVFIFVVPPSMDELSQRIHKRGTESEEVIQKRLQTAARELEYVSEYDYVVVNDEIPLAVDKLKSILLAEKCRVKRKPYVFQGV</sequence>
<organism>
    <name type="scientific">Desulfitobacterium hafniense (strain Y51)</name>
    <dbReference type="NCBI Taxonomy" id="138119"/>
    <lineage>
        <taxon>Bacteria</taxon>
        <taxon>Bacillati</taxon>
        <taxon>Bacillota</taxon>
        <taxon>Clostridia</taxon>
        <taxon>Eubacteriales</taxon>
        <taxon>Desulfitobacteriaceae</taxon>
        <taxon>Desulfitobacterium</taxon>
    </lineage>
</organism>
<feature type="chain" id="PRO_0000266317" description="Guanylate kinase">
    <location>
        <begin position="1"/>
        <end position="200"/>
    </location>
</feature>
<feature type="domain" description="Guanylate kinase-like" evidence="1">
    <location>
        <begin position="6"/>
        <end position="184"/>
    </location>
</feature>
<feature type="binding site" evidence="1">
    <location>
        <begin position="13"/>
        <end position="20"/>
    </location>
    <ligand>
        <name>ATP</name>
        <dbReference type="ChEBI" id="CHEBI:30616"/>
    </ligand>
</feature>
<accession>Q24TX4</accession>
<proteinExistence type="inferred from homology"/>